<feature type="chain" id="PRO_0000182634" description="Flagellin FlaB1">
    <location>
        <begin position="1"/>
        <end position="286"/>
    </location>
</feature>
<feature type="region of interest" description="Required for interaction with FliW" evidence="1">
    <location>
        <begin position="231"/>
        <end position="286"/>
    </location>
</feature>
<feature type="mutagenesis site" description="Peptide of residues 229-247 no longer binds FliW." evidence="1">
    <original>I</original>
    <variation>A</variation>
    <location>
        <position position="233"/>
    </location>
</feature>
<feature type="mutagenesis site" description="Peptide of residues 229-247 no longer binds FliW." evidence="1">
    <original>N</original>
    <variation>A</variation>
    <location>
        <position position="237"/>
    </location>
</feature>
<organism>
    <name type="scientific">Treponema pallidum (strain Nichols)</name>
    <dbReference type="NCBI Taxonomy" id="243276"/>
    <lineage>
        <taxon>Bacteria</taxon>
        <taxon>Pseudomonadati</taxon>
        <taxon>Spirochaetota</taxon>
        <taxon>Spirochaetia</taxon>
        <taxon>Spirochaetales</taxon>
        <taxon>Treponemataceae</taxon>
        <taxon>Treponema</taxon>
    </lineage>
</organism>
<evidence type="ECO:0000269" key="1">
    <source>
    </source>
</evidence>
<evidence type="ECO:0000303" key="2">
    <source>
    </source>
</evidence>
<evidence type="ECO:0000305" key="3"/>
<name>FLAB1_TREPA</name>
<dbReference type="EMBL" id="X63965">
    <property type="protein sequence ID" value="CAA45381.1"/>
    <property type="molecule type" value="Genomic_DNA"/>
</dbReference>
<dbReference type="EMBL" id="AE000520">
    <property type="protein sequence ID" value="AAC65834.1"/>
    <property type="molecule type" value="Genomic_DNA"/>
</dbReference>
<dbReference type="PIR" id="B41489">
    <property type="entry name" value="B41489"/>
</dbReference>
<dbReference type="RefSeq" id="WP_010882311.1">
    <property type="nucleotide sequence ID" value="NC_021490.2"/>
</dbReference>
<dbReference type="SMR" id="P21990"/>
<dbReference type="IntAct" id="P21990">
    <property type="interactions" value="4"/>
</dbReference>
<dbReference type="STRING" id="243276.TP_0868"/>
<dbReference type="EnsemblBacteria" id="AAC65834">
    <property type="protein sequence ID" value="AAC65834"/>
    <property type="gene ID" value="TP_0868"/>
</dbReference>
<dbReference type="KEGG" id="tpa:TP_0868"/>
<dbReference type="KEGG" id="tpw:TPANIC_0868"/>
<dbReference type="eggNOG" id="COG1344">
    <property type="taxonomic scope" value="Bacteria"/>
</dbReference>
<dbReference type="HOGENOM" id="CLU_011142_2_0_12"/>
<dbReference type="OrthoDB" id="9796789at2"/>
<dbReference type="Proteomes" id="UP000000811">
    <property type="component" value="Chromosome"/>
</dbReference>
<dbReference type="GO" id="GO:0055040">
    <property type="term" value="C:periplasmic flagellum"/>
    <property type="evidence" value="ECO:0007669"/>
    <property type="project" value="UniProtKB-SubCell"/>
</dbReference>
<dbReference type="GO" id="GO:0005198">
    <property type="term" value="F:structural molecule activity"/>
    <property type="evidence" value="ECO:0007669"/>
    <property type="project" value="InterPro"/>
</dbReference>
<dbReference type="Gene3D" id="1.20.1330.10">
    <property type="entry name" value="f41 fragment of flagellin, N-terminal domain"/>
    <property type="match status" value="2"/>
</dbReference>
<dbReference type="Gene3D" id="6.10.10.10">
    <property type="entry name" value="Flagellar export chaperone, C-terminal domain"/>
    <property type="match status" value="1"/>
</dbReference>
<dbReference type="InterPro" id="IPR001492">
    <property type="entry name" value="Flagellin"/>
</dbReference>
<dbReference type="InterPro" id="IPR046358">
    <property type="entry name" value="Flagellin_C"/>
</dbReference>
<dbReference type="InterPro" id="IPR042187">
    <property type="entry name" value="Flagellin_C_sub2"/>
</dbReference>
<dbReference type="InterPro" id="IPR001029">
    <property type="entry name" value="Flagellin_N"/>
</dbReference>
<dbReference type="PANTHER" id="PTHR42792">
    <property type="entry name" value="FLAGELLIN"/>
    <property type="match status" value="1"/>
</dbReference>
<dbReference type="PANTHER" id="PTHR42792:SF2">
    <property type="entry name" value="FLAGELLIN"/>
    <property type="match status" value="1"/>
</dbReference>
<dbReference type="Pfam" id="PF00700">
    <property type="entry name" value="Flagellin_C"/>
    <property type="match status" value="1"/>
</dbReference>
<dbReference type="Pfam" id="PF00669">
    <property type="entry name" value="Flagellin_N"/>
    <property type="match status" value="1"/>
</dbReference>
<dbReference type="PRINTS" id="PR00207">
    <property type="entry name" value="FLAGELLIN"/>
</dbReference>
<dbReference type="SUPFAM" id="SSF64518">
    <property type="entry name" value="Phase 1 flagellin"/>
    <property type="match status" value="1"/>
</dbReference>
<proteinExistence type="evidence at protein level"/>
<reference key="1">
    <citation type="journal article" date="1990" name="Infect. Immun.">
        <title>Cloning, sequencing, and expression of two class B endoflagellar genes of Treponema pallidum subsp. pallidum encoding the 34.5- and 31.0-kilodalton proteins.</title>
        <authorList>
            <person name="Champion C.I."/>
            <person name="Miller J.N."/>
            <person name="Lovett M.A."/>
            <person name="Blanco D.R."/>
        </authorList>
    </citation>
    <scope>NUCLEOTIDE SEQUENCE [GENOMIC DNA]</scope>
    <source>
        <strain>Nichols</strain>
    </source>
</reference>
<reference key="2">
    <citation type="journal article" date="1998" name="Science">
        <title>Complete genome sequence of Treponema pallidum, the syphilis spirochete.</title>
        <authorList>
            <person name="Fraser C.M."/>
            <person name="Norris S.J."/>
            <person name="Weinstock G.M."/>
            <person name="White O."/>
            <person name="Sutton G.G."/>
            <person name="Dodson R.J."/>
            <person name="Gwinn M.L."/>
            <person name="Hickey E.K."/>
            <person name="Clayton R.A."/>
            <person name="Ketchum K.A."/>
            <person name="Sodergren E."/>
            <person name="Hardham J.M."/>
            <person name="McLeod M.P."/>
            <person name="Salzberg S.L."/>
            <person name="Peterson J.D."/>
            <person name="Khalak H.G."/>
            <person name="Richardson D.L."/>
            <person name="Howell J.K."/>
            <person name="Chidambaram M."/>
            <person name="Utterback T.R."/>
            <person name="McDonald L.A."/>
            <person name="Artiach P."/>
            <person name="Bowman C."/>
            <person name="Cotton M.D."/>
            <person name="Fujii C."/>
            <person name="Garland S.A."/>
            <person name="Hatch B."/>
            <person name="Horst K."/>
            <person name="Roberts K.M."/>
            <person name="Sandusky M."/>
            <person name="Weidman J.F."/>
            <person name="Smith H.O."/>
            <person name="Venter J.C."/>
        </authorList>
    </citation>
    <scope>NUCLEOTIDE SEQUENCE [LARGE SCALE GENOMIC DNA]</scope>
    <source>
        <strain>Nichols</strain>
    </source>
</reference>
<reference key="3">
    <citation type="journal article" date="1988" name="J. Bacteriol.">
        <title>Antigenic relatedness and N-terminal sequence homology define two classes of periplasmic flagellar proteins of Treponema pallidum subsp. pallidum and Treponema phagedenis.</title>
        <authorList>
            <person name="Norris S.J."/>
            <person name="Charon N.W."/>
            <person name="Cook R.G."/>
            <person name="Fuentes M.D."/>
            <person name="Limberger R.J."/>
        </authorList>
    </citation>
    <scope>PROTEIN SEQUENCE OF 1-20</scope>
</reference>
<reference key="4">
    <citation type="journal article" date="2006" name="J. Bacteriol.">
        <title>Novel conserved assembly factor of the bacterial flagellum.</title>
        <authorList>
            <person name="Titz B."/>
            <person name="Rajagopala S.V."/>
            <person name="Ester C."/>
            <person name="Haeuser R."/>
            <person name="Uetz P."/>
        </authorList>
    </citation>
    <scope>INTERACTION WITH FLIW</scope>
    <scope>MUTAGENESIS OF ILE-233 AND ASN-237</scope>
    <source>
        <strain>Nichols</strain>
    </source>
</reference>
<protein>
    <recommendedName>
        <fullName evidence="3">Flagellin FlaB1</fullName>
    </recommendedName>
    <alternativeName>
        <fullName>Class B</fullName>
    </alternativeName>
    <alternativeName>
        <fullName evidence="2">Flagellar filament 34.5 kDa core protein</fullName>
    </alternativeName>
</protein>
<keyword id="KW-0975">Bacterial flagellum</keyword>
<keyword id="KW-0903">Direct protein sequencing</keyword>
<keyword id="KW-0574">Periplasm</keyword>
<keyword id="KW-1185">Reference proteome</keyword>
<gene>
    <name type="primary">flaB1</name>
    <name type="ordered locus">TP_0868</name>
</gene>
<comment type="function">
    <text>Component of the core of the flagella.</text>
</comment>
<comment type="subunit">
    <text evidence="1">The flagellum consists of an outer layer composed of repeating units of FlaA around a core that contains several antigenically related polypeptides. Interacts via its C-terminus with FliW; a synthetic peptide of residues 229-247 partially blocks binding to FliW (PubMed:16936039).</text>
</comment>
<comment type="subcellular location">
    <subcellularLocation>
        <location>Periplasmic flagellum</location>
    </subcellularLocation>
    <subcellularLocation>
        <location>Periplasm</location>
    </subcellularLocation>
</comment>
<comment type="similarity">
    <text evidence="3">Belongs to the bacterial flagellin family.</text>
</comment>
<accession>P21990</accession>
<sequence>MIINHNMSAMFAQRTLGHTNVQVGKGIEKLSSGYRINRAGDDASGLAVSEKMRSQIRGLNQASTNASNGVNFIQVTEAYLQETTDIMQRIRELAIQAANGIYSAEDRMQIQVEVSQLVAEVDRIASSAQFNGMNLLTGRFSRTEGENVIGGSMWFHIGANMDQRMRVYIGTMTAVALGVRNGVDESIMSIETADSANKSIGTIDAALKRINKQRADLGGYQNRMEYTVVGLDIAAENLQAAESRIRDANIAKQMVEYTKNQVLTQSGTAMLAQANTSAQSILSILR</sequence>